<evidence type="ECO:0000250" key="1"/>
<evidence type="ECO:0000255" key="2">
    <source>
        <dbReference type="HAMAP-Rule" id="MF_00248"/>
    </source>
</evidence>
<gene>
    <name evidence="2" type="primary">hslV</name>
    <name type="ordered locus">PBPRA0254</name>
</gene>
<sequence>MTTIVSVRRNGKVVIAGDGQVSLGNTVMKGNARKVRRLYNNKVLAGFAGGTADAFTLFERFERKLEMHQGHLLKSAVELAKDWRTDRALRKLEAILAVADETGSLIITGNGDVVQPENDLIAIGSGGNFAQAAATALLENTDLGAREIAEKSLNIAGDICVFTNHNHTIEELETK</sequence>
<protein>
    <recommendedName>
        <fullName evidence="2">ATP-dependent protease subunit HslV</fullName>
        <ecNumber evidence="2">3.4.25.2</ecNumber>
    </recommendedName>
</protein>
<dbReference type="EC" id="3.4.25.2" evidence="2"/>
<dbReference type="EMBL" id="CR378663">
    <property type="protein sequence ID" value="CAG18693.1"/>
    <property type="molecule type" value="Genomic_DNA"/>
</dbReference>
<dbReference type="RefSeq" id="WP_006233883.1">
    <property type="nucleotide sequence ID" value="NC_006370.1"/>
</dbReference>
<dbReference type="SMR" id="Q6LVI2"/>
<dbReference type="STRING" id="298386.PBPRA0254"/>
<dbReference type="MEROPS" id="T01.006"/>
<dbReference type="KEGG" id="ppr:PBPRA0254"/>
<dbReference type="eggNOG" id="COG5405">
    <property type="taxonomic scope" value="Bacteria"/>
</dbReference>
<dbReference type="HOGENOM" id="CLU_093872_1_0_6"/>
<dbReference type="Proteomes" id="UP000000593">
    <property type="component" value="Chromosome 1"/>
</dbReference>
<dbReference type="GO" id="GO:0009376">
    <property type="term" value="C:HslUV protease complex"/>
    <property type="evidence" value="ECO:0007669"/>
    <property type="project" value="UniProtKB-UniRule"/>
</dbReference>
<dbReference type="GO" id="GO:0005839">
    <property type="term" value="C:proteasome core complex"/>
    <property type="evidence" value="ECO:0007669"/>
    <property type="project" value="InterPro"/>
</dbReference>
<dbReference type="GO" id="GO:0046872">
    <property type="term" value="F:metal ion binding"/>
    <property type="evidence" value="ECO:0007669"/>
    <property type="project" value="UniProtKB-KW"/>
</dbReference>
<dbReference type="GO" id="GO:0004298">
    <property type="term" value="F:threonine-type endopeptidase activity"/>
    <property type="evidence" value="ECO:0007669"/>
    <property type="project" value="UniProtKB-KW"/>
</dbReference>
<dbReference type="GO" id="GO:0051603">
    <property type="term" value="P:proteolysis involved in protein catabolic process"/>
    <property type="evidence" value="ECO:0007669"/>
    <property type="project" value="InterPro"/>
</dbReference>
<dbReference type="CDD" id="cd01913">
    <property type="entry name" value="protease_HslV"/>
    <property type="match status" value="1"/>
</dbReference>
<dbReference type="FunFam" id="3.60.20.10:FF:000002">
    <property type="entry name" value="ATP-dependent protease subunit HslV"/>
    <property type="match status" value="1"/>
</dbReference>
<dbReference type="Gene3D" id="3.60.20.10">
    <property type="entry name" value="Glutamine Phosphoribosylpyrophosphate, subunit 1, domain 1"/>
    <property type="match status" value="1"/>
</dbReference>
<dbReference type="HAMAP" id="MF_00248">
    <property type="entry name" value="HslV"/>
    <property type="match status" value="1"/>
</dbReference>
<dbReference type="InterPro" id="IPR022281">
    <property type="entry name" value="ATP-dep_Prtase_HsIV_su"/>
</dbReference>
<dbReference type="InterPro" id="IPR029055">
    <property type="entry name" value="Ntn_hydrolases_N"/>
</dbReference>
<dbReference type="InterPro" id="IPR001353">
    <property type="entry name" value="Proteasome_sua/b"/>
</dbReference>
<dbReference type="InterPro" id="IPR023333">
    <property type="entry name" value="Proteasome_suB-type"/>
</dbReference>
<dbReference type="NCBIfam" id="TIGR03692">
    <property type="entry name" value="ATP_dep_HslV"/>
    <property type="match status" value="1"/>
</dbReference>
<dbReference type="NCBIfam" id="NF003964">
    <property type="entry name" value="PRK05456.1"/>
    <property type="match status" value="1"/>
</dbReference>
<dbReference type="PANTHER" id="PTHR32194:SF0">
    <property type="entry name" value="ATP-DEPENDENT PROTEASE SUBUNIT HSLV"/>
    <property type="match status" value="1"/>
</dbReference>
<dbReference type="PANTHER" id="PTHR32194">
    <property type="entry name" value="METALLOPROTEASE TLDD"/>
    <property type="match status" value="1"/>
</dbReference>
<dbReference type="Pfam" id="PF00227">
    <property type="entry name" value="Proteasome"/>
    <property type="match status" value="1"/>
</dbReference>
<dbReference type="PIRSF" id="PIRSF039093">
    <property type="entry name" value="HslV"/>
    <property type="match status" value="1"/>
</dbReference>
<dbReference type="SUPFAM" id="SSF56235">
    <property type="entry name" value="N-terminal nucleophile aminohydrolases (Ntn hydrolases)"/>
    <property type="match status" value="1"/>
</dbReference>
<dbReference type="PROSITE" id="PS51476">
    <property type="entry name" value="PROTEASOME_BETA_2"/>
    <property type="match status" value="1"/>
</dbReference>
<proteinExistence type="inferred from homology"/>
<accession>Q6LVI2</accession>
<comment type="function">
    <text evidence="2">Protease subunit of a proteasome-like degradation complex believed to be a general protein degrading machinery.</text>
</comment>
<comment type="catalytic activity">
    <reaction evidence="2">
        <text>ATP-dependent cleavage of peptide bonds with broad specificity.</text>
        <dbReference type="EC" id="3.4.25.2"/>
    </reaction>
</comment>
<comment type="activity regulation">
    <text evidence="2">Allosterically activated by HslU binding.</text>
</comment>
<comment type="subunit">
    <text evidence="2">A double ring-shaped homohexamer of HslV is capped on each side by a ring-shaped HslU homohexamer. The assembly of the HslU/HslV complex is dependent on binding of ATP.</text>
</comment>
<comment type="subcellular location">
    <subcellularLocation>
        <location evidence="2">Cytoplasm</location>
    </subcellularLocation>
</comment>
<comment type="similarity">
    <text evidence="2">Belongs to the peptidase T1B family. HslV subfamily.</text>
</comment>
<feature type="initiator methionine" description="Removed" evidence="1">
    <location>
        <position position="1"/>
    </location>
</feature>
<feature type="chain" id="PRO_0000148131" description="ATP-dependent protease subunit HslV">
    <location>
        <begin position="2"/>
        <end position="175"/>
    </location>
</feature>
<feature type="active site" evidence="2">
    <location>
        <position position="2"/>
    </location>
</feature>
<feature type="binding site" evidence="2">
    <location>
        <position position="157"/>
    </location>
    <ligand>
        <name>Na(+)</name>
        <dbReference type="ChEBI" id="CHEBI:29101"/>
    </ligand>
</feature>
<feature type="binding site" evidence="2">
    <location>
        <position position="160"/>
    </location>
    <ligand>
        <name>Na(+)</name>
        <dbReference type="ChEBI" id="CHEBI:29101"/>
    </ligand>
</feature>
<feature type="binding site" evidence="2">
    <location>
        <position position="163"/>
    </location>
    <ligand>
        <name>Na(+)</name>
        <dbReference type="ChEBI" id="CHEBI:29101"/>
    </ligand>
</feature>
<organism>
    <name type="scientific">Photobacterium profundum (strain SS9)</name>
    <dbReference type="NCBI Taxonomy" id="298386"/>
    <lineage>
        <taxon>Bacteria</taxon>
        <taxon>Pseudomonadati</taxon>
        <taxon>Pseudomonadota</taxon>
        <taxon>Gammaproteobacteria</taxon>
        <taxon>Vibrionales</taxon>
        <taxon>Vibrionaceae</taxon>
        <taxon>Photobacterium</taxon>
    </lineage>
</organism>
<reference key="1">
    <citation type="journal article" date="2005" name="Science">
        <title>Life at depth: Photobacterium profundum genome sequence and expression analysis.</title>
        <authorList>
            <person name="Vezzi A."/>
            <person name="Campanaro S."/>
            <person name="D'Angelo M."/>
            <person name="Simonato F."/>
            <person name="Vitulo N."/>
            <person name="Lauro F.M."/>
            <person name="Cestaro A."/>
            <person name="Malacrida G."/>
            <person name="Simionati B."/>
            <person name="Cannata N."/>
            <person name="Romualdi C."/>
            <person name="Bartlett D.H."/>
            <person name="Valle G."/>
        </authorList>
    </citation>
    <scope>NUCLEOTIDE SEQUENCE [LARGE SCALE GENOMIC DNA]</scope>
    <source>
        <strain>ATCC BAA-1253 / SS9</strain>
    </source>
</reference>
<name>HSLV_PHOPR</name>
<keyword id="KW-0021">Allosteric enzyme</keyword>
<keyword id="KW-0963">Cytoplasm</keyword>
<keyword id="KW-0378">Hydrolase</keyword>
<keyword id="KW-0479">Metal-binding</keyword>
<keyword id="KW-0645">Protease</keyword>
<keyword id="KW-1185">Reference proteome</keyword>
<keyword id="KW-0915">Sodium</keyword>
<keyword id="KW-0888">Threonine protease</keyword>